<accession>A9NBI0</accession>
<name>UBIG_COXBR</name>
<gene>
    <name evidence="1" type="primary">ubiG</name>
    <name type="ordered locus">COXBURSA331_A0458</name>
</gene>
<dbReference type="EC" id="2.1.1.222" evidence="1"/>
<dbReference type="EC" id="2.1.1.64" evidence="1"/>
<dbReference type="EMBL" id="CP000890">
    <property type="protein sequence ID" value="ABX77424.1"/>
    <property type="molecule type" value="Genomic_DNA"/>
</dbReference>
<dbReference type="RefSeq" id="WP_010957522.1">
    <property type="nucleotide sequence ID" value="NC_010117.1"/>
</dbReference>
<dbReference type="SMR" id="A9NBI0"/>
<dbReference type="KEGG" id="cbs:COXBURSA331_A0458"/>
<dbReference type="HOGENOM" id="CLU_042432_5_0_6"/>
<dbReference type="UniPathway" id="UPA00232"/>
<dbReference type="GO" id="GO:0102208">
    <property type="term" value="F:2-polyprenyl-6-hydroxyphenol methylase activity"/>
    <property type="evidence" value="ECO:0007669"/>
    <property type="project" value="UniProtKB-EC"/>
</dbReference>
<dbReference type="GO" id="GO:0061542">
    <property type="term" value="F:3-demethylubiquinol 3-O-methyltransferase activity"/>
    <property type="evidence" value="ECO:0007669"/>
    <property type="project" value="UniProtKB-UniRule"/>
</dbReference>
<dbReference type="GO" id="GO:0010420">
    <property type="term" value="F:polyprenyldihydroxybenzoate methyltransferase activity"/>
    <property type="evidence" value="ECO:0007669"/>
    <property type="project" value="InterPro"/>
</dbReference>
<dbReference type="GO" id="GO:0032259">
    <property type="term" value="P:methylation"/>
    <property type="evidence" value="ECO:0007669"/>
    <property type="project" value="UniProtKB-KW"/>
</dbReference>
<dbReference type="CDD" id="cd02440">
    <property type="entry name" value="AdoMet_MTases"/>
    <property type="match status" value="1"/>
</dbReference>
<dbReference type="FunFam" id="3.40.50.150:FF:000028">
    <property type="entry name" value="Ubiquinone biosynthesis O-methyltransferase"/>
    <property type="match status" value="1"/>
</dbReference>
<dbReference type="Gene3D" id="3.40.50.150">
    <property type="entry name" value="Vaccinia Virus protein VP39"/>
    <property type="match status" value="1"/>
</dbReference>
<dbReference type="HAMAP" id="MF_00472">
    <property type="entry name" value="UbiG"/>
    <property type="match status" value="1"/>
</dbReference>
<dbReference type="InterPro" id="IPR029063">
    <property type="entry name" value="SAM-dependent_MTases_sf"/>
</dbReference>
<dbReference type="InterPro" id="IPR010233">
    <property type="entry name" value="UbiG_MeTrfase"/>
</dbReference>
<dbReference type="NCBIfam" id="TIGR01983">
    <property type="entry name" value="UbiG"/>
    <property type="match status" value="1"/>
</dbReference>
<dbReference type="PANTHER" id="PTHR43464">
    <property type="entry name" value="METHYLTRANSFERASE"/>
    <property type="match status" value="1"/>
</dbReference>
<dbReference type="PANTHER" id="PTHR43464:SF19">
    <property type="entry name" value="UBIQUINONE BIOSYNTHESIS O-METHYLTRANSFERASE, MITOCHONDRIAL"/>
    <property type="match status" value="1"/>
</dbReference>
<dbReference type="Pfam" id="PF13489">
    <property type="entry name" value="Methyltransf_23"/>
    <property type="match status" value="1"/>
</dbReference>
<dbReference type="SUPFAM" id="SSF53335">
    <property type="entry name" value="S-adenosyl-L-methionine-dependent methyltransferases"/>
    <property type="match status" value="1"/>
</dbReference>
<feature type="chain" id="PRO_1000081218" description="Ubiquinone biosynthesis O-methyltransferase">
    <location>
        <begin position="1"/>
        <end position="234"/>
    </location>
</feature>
<feature type="binding site" evidence="1">
    <location>
        <position position="40"/>
    </location>
    <ligand>
        <name>S-adenosyl-L-methionine</name>
        <dbReference type="ChEBI" id="CHEBI:59789"/>
    </ligand>
</feature>
<feature type="binding site" evidence="1">
    <location>
        <position position="59"/>
    </location>
    <ligand>
        <name>S-adenosyl-L-methionine</name>
        <dbReference type="ChEBI" id="CHEBI:59789"/>
    </ligand>
</feature>
<feature type="binding site" evidence="1">
    <location>
        <position position="80"/>
    </location>
    <ligand>
        <name>S-adenosyl-L-methionine</name>
        <dbReference type="ChEBI" id="CHEBI:59789"/>
    </ligand>
</feature>
<feature type="binding site" evidence="1">
    <location>
        <position position="123"/>
    </location>
    <ligand>
        <name>S-adenosyl-L-methionine</name>
        <dbReference type="ChEBI" id="CHEBI:59789"/>
    </ligand>
</feature>
<keyword id="KW-0489">Methyltransferase</keyword>
<keyword id="KW-0949">S-adenosyl-L-methionine</keyword>
<keyword id="KW-0808">Transferase</keyword>
<keyword id="KW-0831">Ubiquinone biosynthesis</keyword>
<reference key="1">
    <citation type="submission" date="2007-11" db="EMBL/GenBank/DDBJ databases">
        <title>Genome sequencing of phylogenetically and phenotypically diverse Coxiella burnetii isolates.</title>
        <authorList>
            <person name="Seshadri R."/>
            <person name="Samuel J.E."/>
        </authorList>
    </citation>
    <scope>NUCLEOTIDE SEQUENCE [LARGE SCALE GENOMIC DNA]</scope>
    <source>
        <strain>RSA 331 / Henzerling II</strain>
    </source>
</reference>
<proteinExistence type="inferred from homology"/>
<organism>
    <name type="scientific">Coxiella burnetii (strain RSA 331 / Henzerling II)</name>
    <dbReference type="NCBI Taxonomy" id="360115"/>
    <lineage>
        <taxon>Bacteria</taxon>
        <taxon>Pseudomonadati</taxon>
        <taxon>Pseudomonadota</taxon>
        <taxon>Gammaproteobacteria</taxon>
        <taxon>Legionellales</taxon>
        <taxon>Coxiellaceae</taxon>
        <taxon>Coxiella</taxon>
    </lineage>
</organism>
<evidence type="ECO:0000255" key="1">
    <source>
        <dbReference type="HAMAP-Rule" id="MF_00472"/>
    </source>
</evidence>
<protein>
    <recommendedName>
        <fullName evidence="1">Ubiquinone biosynthesis O-methyltransferase</fullName>
    </recommendedName>
    <alternativeName>
        <fullName evidence="1">2-polyprenyl-6-hydroxyphenol methylase</fullName>
        <ecNumber evidence="1">2.1.1.222</ecNumber>
    </alternativeName>
    <alternativeName>
        <fullName evidence="1">3-demethylubiquinone 3-O-methyltransferase</fullName>
        <ecNumber evidence="1">2.1.1.64</ecNumber>
    </alternativeName>
</protein>
<comment type="function">
    <text evidence="1">O-methyltransferase that catalyzes the 2 O-methylation steps in the ubiquinone biosynthetic pathway.</text>
</comment>
<comment type="catalytic activity">
    <reaction evidence="1">
        <text>a 3-demethylubiquinol + S-adenosyl-L-methionine = a ubiquinol + S-adenosyl-L-homocysteine + H(+)</text>
        <dbReference type="Rhea" id="RHEA:44380"/>
        <dbReference type="Rhea" id="RHEA-COMP:9566"/>
        <dbReference type="Rhea" id="RHEA-COMP:10914"/>
        <dbReference type="ChEBI" id="CHEBI:15378"/>
        <dbReference type="ChEBI" id="CHEBI:17976"/>
        <dbReference type="ChEBI" id="CHEBI:57856"/>
        <dbReference type="ChEBI" id="CHEBI:59789"/>
        <dbReference type="ChEBI" id="CHEBI:84422"/>
        <dbReference type="EC" id="2.1.1.64"/>
    </reaction>
</comment>
<comment type="catalytic activity">
    <reaction evidence="1">
        <text>a 3-(all-trans-polyprenyl)benzene-1,2-diol + S-adenosyl-L-methionine = a 2-methoxy-6-(all-trans-polyprenyl)phenol + S-adenosyl-L-homocysteine + H(+)</text>
        <dbReference type="Rhea" id="RHEA:31411"/>
        <dbReference type="Rhea" id="RHEA-COMP:9550"/>
        <dbReference type="Rhea" id="RHEA-COMP:9551"/>
        <dbReference type="ChEBI" id="CHEBI:15378"/>
        <dbReference type="ChEBI" id="CHEBI:57856"/>
        <dbReference type="ChEBI" id="CHEBI:59789"/>
        <dbReference type="ChEBI" id="CHEBI:62729"/>
        <dbReference type="ChEBI" id="CHEBI:62731"/>
        <dbReference type="EC" id="2.1.1.222"/>
    </reaction>
</comment>
<comment type="pathway">
    <text evidence="1">Cofactor biosynthesis; ubiquinone biosynthesis.</text>
</comment>
<comment type="similarity">
    <text evidence="1">Belongs to the methyltransferase superfamily. UbiG/COQ3 family.</text>
</comment>
<sequence length="234" mass="26485">MTLSEQNIDKEELAKFSDLAQDWWNPAGKMKPLHLINPVRLKYIEQQITLKGKHVLDVGCGGGLLSEALAKHGAIVTGVDMSESLIDVAKNHAEQQQLNINYQCQDIEILTKDAQRFDIITCMELLEHVPDPQRMIKNCAALIKPGGKLFFSTINRNFKAYLYTIVGAEYVFNLLPKGTHDYAQFIRPSELTQWAESGGLRLLDITGIHYHPLKNEFDLSRDVSVNYLACFTHE</sequence>